<gene>
    <name evidence="1" type="primary">hemA</name>
    <name type="ordered locus">A9601_08301</name>
</gene>
<proteinExistence type="inferred from homology"/>
<feature type="chain" id="PRO_1000004666" description="Glutamyl-tRNA reductase">
    <location>
        <begin position="1"/>
        <end position="436"/>
    </location>
</feature>
<feature type="active site" description="Nucleophile" evidence="1">
    <location>
        <position position="50"/>
    </location>
</feature>
<feature type="binding site" evidence="1">
    <location>
        <begin position="49"/>
        <end position="52"/>
    </location>
    <ligand>
        <name>substrate</name>
    </ligand>
</feature>
<feature type="binding site" evidence="1">
    <location>
        <position position="109"/>
    </location>
    <ligand>
        <name>substrate</name>
    </ligand>
</feature>
<feature type="binding site" evidence="1">
    <location>
        <begin position="114"/>
        <end position="116"/>
    </location>
    <ligand>
        <name>substrate</name>
    </ligand>
</feature>
<feature type="binding site" evidence="1">
    <location>
        <position position="120"/>
    </location>
    <ligand>
        <name>substrate</name>
    </ligand>
</feature>
<feature type="binding site" evidence="1">
    <location>
        <begin position="198"/>
        <end position="203"/>
    </location>
    <ligand>
        <name>NADP(+)</name>
        <dbReference type="ChEBI" id="CHEBI:58349"/>
    </ligand>
</feature>
<feature type="site" description="Important for activity" evidence="1">
    <location>
        <position position="99"/>
    </location>
</feature>
<name>HEM1_PROMS</name>
<accession>A2BQQ3</accession>
<protein>
    <recommendedName>
        <fullName evidence="1">Glutamyl-tRNA reductase</fullName>
        <shortName evidence="1">GluTR</shortName>
        <ecNumber evidence="1">1.2.1.70</ecNumber>
    </recommendedName>
</protein>
<comment type="function">
    <text evidence="1">Catalyzes the NADPH-dependent reduction of glutamyl-tRNA(Glu) to glutamate 1-semialdehyde (GSA).</text>
</comment>
<comment type="catalytic activity">
    <reaction evidence="1">
        <text>(S)-4-amino-5-oxopentanoate + tRNA(Glu) + NADP(+) = L-glutamyl-tRNA(Glu) + NADPH + H(+)</text>
        <dbReference type="Rhea" id="RHEA:12344"/>
        <dbReference type="Rhea" id="RHEA-COMP:9663"/>
        <dbReference type="Rhea" id="RHEA-COMP:9680"/>
        <dbReference type="ChEBI" id="CHEBI:15378"/>
        <dbReference type="ChEBI" id="CHEBI:57501"/>
        <dbReference type="ChEBI" id="CHEBI:57783"/>
        <dbReference type="ChEBI" id="CHEBI:58349"/>
        <dbReference type="ChEBI" id="CHEBI:78442"/>
        <dbReference type="ChEBI" id="CHEBI:78520"/>
        <dbReference type="EC" id="1.2.1.70"/>
    </reaction>
</comment>
<comment type="pathway">
    <text evidence="1">Porphyrin-containing compound metabolism; protoporphyrin-IX biosynthesis; 5-aminolevulinate from L-glutamyl-tRNA(Glu): step 1/2.</text>
</comment>
<comment type="pathway">
    <text evidence="1">Porphyrin-containing compound metabolism; chlorophyll biosynthesis.</text>
</comment>
<comment type="subunit">
    <text evidence="1">Homodimer.</text>
</comment>
<comment type="domain">
    <text evidence="1">Possesses an unusual extended V-shaped dimeric structure with each monomer consisting of three distinct domains arranged along a curved 'spinal' alpha-helix. The N-terminal catalytic domain specifically recognizes the glutamate moiety of the substrate. The second domain is the NADPH-binding domain, and the third C-terminal domain is responsible for dimerization.</text>
</comment>
<comment type="miscellaneous">
    <text evidence="1">During catalysis, the active site Cys acts as a nucleophile attacking the alpha-carbonyl group of tRNA-bound glutamate with the formation of a thioester intermediate between enzyme and glutamate, and the concomitant release of tRNA(Glu). The thioester intermediate is finally reduced by direct hydride transfer from NADPH, to form the product GSA.</text>
</comment>
<comment type="similarity">
    <text evidence="1">Belongs to the glutamyl-tRNA reductase family.</text>
</comment>
<reference key="1">
    <citation type="journal article" date="2007" name="PLoS Genet.">
        <title>Patterns and implications of gene gain and loss in the evolution of Prochlorococcus.</title>
        <authorList>
            <person name="Kettler G.C."/>
            <person name="Martiny A.C."/>
            <person name="Huang K."/>
            <person name="Zucker J."/>
            <person name="Coleman M.L."/>
            <person name="Rodrigue S."/>
            <person name="Chen F."/>
            <person name="Lapidus A."/>
            <person name="Ferriera S."/>
            <person name="Johnson J."/>
            <person name="Steglich C."/>
            <person name="Church G.M."/>
            <person name="Richardson P."/>
            <person name="Chisholm S.W."/>
        </authorList>
    </citation>
    <scope>NUCLEOTIDE SEQUENCE [LARGE SCALE GENOMIC DNA]</scope>
    <source>
        <strain>AS9601</strain>
    </source>
</reference>
<sequence>MHIVVVGLSHRTAPVEVREKLSIPDQSITESLKALKAFSDVLEVSILSTCNRMEIYALVKDKNTGISSIKEFISEYSGIIFEDLNPHLFCFRQEEAVLHLMKVSAGLDSLVLGEGQILSQVKKMMRLGQENQSTGPILNRLLTQSVSTGKKVRSETNLGTGAVSISSAAVELAQLKIGQEKGFDTLVSLESENVLVVGAGRMSRLLITHLKSKGCHKLILLNRNIDRALNLAQDFPDLEIVCRGLNELEENISLSSIVFTSTASEEPIIDLAKIEKLNLSNRLKFIDIGVPRNISNDVKQHQFVKSFDVDDLQEVVSRNQEFRQKIAKEAESLVEEERIIFLEWWASLEAVPVINKLRSDLELIRKEELQKALSRMGPDFSARERKVVEALTKGIINKILHTPVTKLRSPQSREERQVSLKIVEKLFSLVEEEQNN</sequence>
<dbReference type="EC" id="1.2.1.70" evidence="1"/>
<dbReference type="EMBL" id="CP000551">
    <property type="protein sequence ID" value="ABM70114.1"/>
    <property type="molecule type" value="Genomic_DNA"/>
</dbReference>
<dbReference type="RefSeq" id="WP_011818273.1">
    <property type="nucleotide sequence ID" value="NC_008816.1"/>
</dbReference>
<dbReference type="SMR" id="A2BQQ3"/>
<dbReference type="STRING" id="146891.A9601_08301"/>
<dbReference type="KEGG" id="pmb:A9601_08301"/>
<dbReference type="eggNOG" id="COG0373">
    <property type="taxonomic scope" value="Bacteria"/>
</dbReference>
<dbReference type="HOGENOM" id="CLU_035113_2_1_3"/>
<dbReference type="OrthoDB" id="110209at2"/>
<dbReference type="UniPathway" id="UPA00251">
    <property type="reaction ID" value="UER00316"/>
</dbReference>
<dbReference type="UniPathway" id="UPA00668"/>
<dbReference type="Proteomes" id="UP000002590">
    <property type="component" value="Chromosome"/>
</dbReference>
<dbReference type="GO" id="GO:0008883">
    <property type="term" value="F:glutamyl-tRNA reductase activity"/>
    <property type="evidence" value="ECO:0007669"/>
    <property type="project" value="UniProtKB-UniRule"/>
</dbReference>
<dbReference type="GO" id="GO:0050661">
    <property type="term" value="F:NADP binding"/>
    <property type="evidence" value="ECO:0007669"/>
    <property type="project" value="InterPro"/>
</dbReference>
<dbReference type="GO" id="GO:0015995">
    <property type="term" value="P:chlorophyll biosynthetic process"/>
    <property type="evidence" value="ECO:0007669"/>
    <property type="project" value="UniProtKB-UniRule"/>
</dbReference>
<dbReference type="GO" id="GO:0006782">
    <property type="term" value="P:protoporphyrinogen IX biosynthetic process"/>
    <property type="evidence" value="ECO:0007669"/>
    <property type="project" value="UniProtKB-UniRule"/>
</dbReference>
<dbReference type="CDD" id="cd05213">
    <property type="entry name" value="NAD_bind_Glutamyl_tRNA_reduct"/>
    <property type="match status" value="1"/>
</dbReference>
<dbReference type="FunFam" id="3.30.460.30:FF:000001">
    <property type="entry name" value="Glutamyl-tRNA reductase"/>
    <property type="match status" value="1"/>
</dbReference>
<dbReference type="Gene3D" id="3.30.460.30">
    <property type="entry name" value="Glutamyl-tRNA reductase, N-terminal domain"/>
    <property type="match status" value="1"/>
</dbReference>
<dbReference type="Gene3D" id="3.40.50.720">
    <property type="entry name" value="NAD(P)-binding Rossmann-like Domain"/>
    <property type="match status" value="1"/>
</dbReference>
<dbReference type="HAMAP" id="MF_00087">
    <property type="entry name" value="Glu_tRNA_reductase"/>
    <property type="match status" value="1"/>
</dbReference>
<dbReference type="InterPro" id="IPR000343">
    <property type="entry name" value="4pyrrol_synth_GluRdtase"/>
</dbReference>
<dbReference type="InterPro" id="IPR015896">
    <property type="entry name" value="4pyrrol_synth_GluRdtase_dimer"/>
</dbReference>
<dbReference type="InterPro" id="IPR015895">
    <property type="entry name" value="4pyrrol_synth_GluRdtase_N"/>
</dbReference>
<dbReference type="InterPro" id="IPR018214">
    <property type="entry name" value="GluRdtase_CS"/>
</dbReference>
<dbReference type="InterPro" id="IPR036453">
    <property type="entry name" value="GluRdtase_dimer_dom_sf"/>
</dbReference>
<dbReference type="InterPro" id="IPR036343">
    <property type="entry name" value="GluRdtase_N_sf"/>
</dbReference>
<dbReference type="InterPro" id="IPR036291">
    <property type="entry name" value="NAD(P)-bd_dom_sf"/>
</dbReference>
<dbReference type="InterPro" id="IPR006151">
    <property type="entry name" value="Shikm_DH/Glu-tRNA_Rdtase"/>
</dbReference>
<dbReference type="NCBIfam" id="TIGR01035">
    <property type="entry name" value="hemA"/>
    <property type="match status" value="1"/>
</dbReference>
<dbReference type="NCBIfam" id="NF000744">
    <property type="entry name" value="PRK00045.1-3"/>
    <property type="match status" value="1"/>
</dbReference>
<dbReference type="PANTHER" id="PTHR43120">
    <property type="entry name" value="GLUTAMYL-TRNA REDUCTASE 1, CHLOROPLASTIC"/>
    <property type="match status" value="1"/>
</dbReference>
<dbReference type="PANTHER" id="PTHR43120:SF1">
    <property type="entry name" value="GLUTAMYL-TRNA REDUCTASE 1, CHLOROPLASTIC"/>
    <property type="match status" value="1"/>
</dbReference>
<dbReference type="Pfam" id="PF00745">
    <property type="entry name" value="GlutR_dimer"/>
    <property type="match status" value="1"/>
</dbReference>
<dbReference type="Pfam" id="PF05201">
    <property type="entry name" value="GlutR_N"/>
    <property type="match status" value="1"/>
</dbReference>
<dbReference type="Pfam" id="PF01488">
    <property type="entry name" value="Shikimate_DH"/>
    <property type="match status" value="1"/>
</dbReference>
<dbReference type="PIRSF" id="PIRSF000445">
    <property type="entry name" value="4pyrrol_synth_GluRdtase"/>
    <property type="match status" value="1"/>
</dbReference>
<dbReference type="SUPFAM" id="SSF69742">
    <property type="entry name" value="Glutamyl tRNA-reductase catalytic, N-terminal domain"/>
    <property type="match status" value="1"/>
</dbReference>
<dbReference type="SUPFAM" id="SSF69075">
    <property type="entry name" value="Glutamyl tRNA-reductase dimerization domain"/>
    <property type="match status" value="1"/>
</dbReference>
<dbReference type="SUPFAM" id="SSF51735">
    <property type="entry name" value="NAD(P)-binding Rossmann-fold domains"/>
    <property type="match status" value="1"/>
</dbReference>
<dbReference type="PROSITE" id="PS00747">
    <property type="entry name" value="GLUTR"/>
    <property type="match status" value="1"/>
</dbReference>
<evidence type="ECO:0000255" key="1">
    <source>
        <dbReference type="HAMAP-Rule" id="MF_00087"/>
    </source>
</evidence>
<keyword id="KW-0149">Chlorophyll biosynthesis</keyword>
<keyword id="KW-0521">NADP</keyword>
<keyword id="KW-0560">Oxidoreductase</keyword>
<keyword id="KW-0627">Porphyrin biosynthesis</keyword>
<organism>
    <name type="scientific">Prochlorococcus marinus (strain AS9601)</name>
    <dbReference type="NCBI Taxonomy" id="146891"/>
    <lineage>
        <taxon>Bacteria</taxon>
        <taxon>Bacillati</taxon>
        <taxon>Cyanobacteriota</taxon>
        <taxon>Cyanophyceae</taxon>
        <taxon>Synechococcales</taxon>
        <taxon>Prochlorococcaceae</taxon>
        <taxon>Prochlorococcus</taxon>
    </lineage>
</organism>